<accession>Q4ZWK6</accession>
<dbReference type="EMBL" id="CP000075">
    <property type="protein sequence ID" value="AAY36466.1"/>
    <property type="molecule type" value="Genomic_DNA"/>
</dbReference>
<dbReference type="RefSeq" id="YP_234504.1">
    <property type="nucleotide sequence ID" value="NC_007005.1"/>
</dbReference>
<dbReference type="SMR" id="Q4ZWK6"/>
<dbReference type="STRING" id="205918.Psyr_1415"/>
<dbReference type="KEGG" id="psb:Psyr_1415"/>
<dbReference type="PATRIC" id="fig|205918.7.peg.1451"/>
<dbReference type="eggNOG" id="COG0823">
    <property type="taxonomic scope" value="Bacteria"/>
</dbReference>
<dbReference type="HOGENOM" id="CLU_047123_0_0_6"/>
<dbReference type="OrthoDB" id="9802240at2"/>
<dbReference type="Proteomes" id="UP000000426">
    <property type="component" value="Chromosome"/>
</dbReference>
<dbReference type="GO" id="GO:0042597">
    <property type="term" value="C:periplasmic space"/>
    <property type="evidence" value="ECO:0007669"/>
    <property type="project" value="UniProtKB-SubCell"/>
</dbReference>
<dbReference type="GO" id="GO:0051301">
    <property type="term" value="P:cell division"/>
    <property type="evidence" value="ECO:0007669"/>
    <property type="project" value="UniProtKB-UniRule"/>
</dbReference>
<dbReference type="GO" id="GO:0017038">
    <property type="term" value="P:protein import"/>
    <property type="evidence" value="ECO:0007669"/>
    <property type="project" value="InterPro"/>
</dbReference>
<dbReference type="Gene3D" id="2.120.10.30">
    <property type="entry name" value="TolB, C-terminal domain"/>
    <property type="match status" value="1"/>
</dbReference>
<dbReference type="Gene3D" id="3.40.50.10070">
    <property type="entry name" value="TolB, N-terminal domain"/>
    <property type="match status" value="1"/>
</dbReference>
<dbReference type="HAMAP" id="MF_00671">
    <property type="entry name" value="TolB"/>
    <property type="match status" value="1"/>
</dbReference>
<dbReference type="InterPro" id="IPR011042">
    <property type="entry name" value="6-blade_b-propeller_TolB-like"/>
</dbReference>
<dbReference type="InterPro" id="IPR011659">
    <property type="entry name" value="PD40"/>
</dbReference>
<dbReference type="InterPro" id="IPR014167">
    <property type="entry name" value="Tol-Pal_TolB"/>
</dbReference>
<dbReference type="InterPro" id="IPR007195">
    <property type="entry name" value="TolB_N"/>
</dbReference>
<dbReference type="NCBIfam" id="TIGR02800">
    <property type="entry name" value="propeller_TolB"/>
    <property type="match status" value="1"/>
</dbReference>
<dbReference type="PANTHER" id="PTHR36842:SF1">
    <property type="entry name" value="PROTEIN TOLB"/>
    <property type="match status" value="1"/>
</dbReference>
<dbReference type="PANTHER" id="PTHR36842">
    <property type="entry name" value="PROTEIN TOLB HOMOLOG"/>
    <property type="match status" value="1"/>
</dbReference>
<dbReference type="Pfam" id="PF07676">
    <property type="entry name" value="PD40"/>
    <property type="match status" value="4"/>
</dbReference>
<dbReference type="Pfam" id="PF04052">
    <property type="entry name" value="TolB_N"/>
    <property type="match status" value="1"/>
</dbReference>
<dbReference type="SUPFAM" id="SSF52964">
    <property type="entry name" value="TolB, N-terminal domain"/>
    <property type="match status" value="1"/>
</dbReference>
<dbReference type="SUPFAM" id="SSF69304">
    <property type="entry name" value="Tricorn protease N-terminal domain"/>
    <property type="match status" value="1"/>
</dbReference>
<evidence type="ECO:0000255" key="1">
    <source>
        <dbReference type="HAMAP-Rule" id="MF_00671"/>
    </source>
</evidence>
<feature type="signal peptide" evidence="1">
    <location>
        <begin position="1"/>
        <end position="21"/>
    </location>
</feature>
<feature type="chain" id="PRO_0000259073" description="Tol-Pal system protein TolB" evidence="1">
    <location>
        <begin position="22"/>
        <end position="433"/>
    </location>
</feature>
<reference key="1">
    <citation type="journal article" date="2005" name="Proc. Natl. Acad. Sci. U.S.A.">
        <title>Comparison of the complete genome sequences of Pseudomonas syringae pv. syringae B728a and pv. tomato DC3000.</title>
        <authorList>
            <person name="Feil H."/>
            <person name="Feil W.S."/>
            <person name="Chain P."/>
            <person name="Larimer F."/>
            <person name="Dibartolo G."/>
            <person name="Copeland A."/>
            <person name="Lykidis A."/>
            <person name="Trong S."/>
            <person name="Nolan M."/>
            <person name="Goltsman E."/>
            <person name="Thiel J."/>
            <person name="Malfatti S."/>
            <person name="Loper J.E."/>
            <person name="Lapidus A."/>
            <person name="Detter J.C."/>
            <person name="Land M."/>
            <person name="Richardson P.M."/>
            <person name="Kyrpides N.C."/>
            <person name="Ivanova N."/>
            <person name="Lindow S.E."/>
        </authorList>
    </citation>
    <scope>NUCLEOTIDE SEQUENCE [LARGE SCALE GENOMIC DNA]</scope>
    <source>
        <strain>B728a</strain>
    </source>
</reference>
<protein>
    <recommendedName>
        <fullName evidence="1">Tol-Pal system protein TolB</fullName>
    </recommendedName>
</protein>
<organism>
    <name type="scientific">Pseudomonas syringae pv. syringae (strain B728a)</name>
    <dbReference type="NCBI Taxonomy" id="205918"/>
    <lineage>
        <taxon>Bacteria</taxon>
        <taxon>Pseudomonadati</taxon>
        <taxon>Pseudomonadota</taxon>
        <taxon>Gammaproteobacteria</taxon>
        <taxon>Pseudomonadales</taxon>
        <taxon>Pseudomonadaceae</taxon>
        <taxon>Pseudomonas</taxon>
        <taxon>Pseudomonas syringae</taxon>
    </lineage>
</organism>
<sequence>MINLFRGLLVVLCFASAMVSAEEKNILVTSGSDRAAPIAVVPFGWQGGSVLPEDMAEIISNDLRNSGYYAPIPKQNMISLPTQASEVIFRDWKALGAQYVMVGNITPAGGRLQIQYALFNVATEQQVLTGNVSGTNDQLRDMAHYIADQSFEKLTGIKGAFSTRMLYVTAERFSENNTRYTLQRSDYDGARAVTLLQSREPILSPRFAPDGKRIAYVSFEQKRPRIFVQHIDTGRREQITNFEGLNGAPAWSPDGSKLAFVLSKDGNPEIYVINLASRQLSRVTNDSSIDTEPFFGKDGSTLYFTSDRGGKPQIYKTNINGGGAERVTFVGNYNANPKLSADEKTLVMIHRQDGFTNFKVAVQDLARGSVKILTDSNLDESPTVAPNGTMVIYATRQQGRGVLMLVSINGRVRLPLPTAQGEVREPSWSPYLN</sequence>
<proteinExistence type="inferred from homology"/>
<comment type="function">
    <text evidence="1">Part of the Tol-Pal system, which plays a role in outer membrane invagination during cell division and is important for maintaining outer membrane integrity.</text>
</comment>
<comment type="subunit">
    <text evidence="1">The Tol-Pal system is composed of five core proteins: the inner membrane proteins TolA, TolQ and TolR, the periplasmic protein TolB and the outer membrane protein Pal. They form a network linking the inner and outer membranes and the peptidoglycan layer.</text>
</comment>
<comment type="subcellular location">
    <subcellularLocation>
        <location evidence="1">Periplasm</location>
    </subcellularLocation>
</comment>
<comment type="similarity">
    <text evidence="1">Belongs to the TolB family.</text>
</comment>
<name>TOLB_PSEU2</name>
<gene>
    <name evidence="1" type="primary">tolB</name>
    <name type="ordered locus">Psyr_1415</name>
</gene>
<keyword id="KW-0131">Cell cycle</keyword>
<keyword id="KW-0132">Cell division</keyword>
<keyword id="KW-0574">Periplasm</keyword>
<keyword id="KW-0732">Signal</keyword>